<name>HIS3_METFK</name>
<keyword id="KW-0028">Amino-acid biosynthesis</keyword>
<keyword id="KW-0963">Cytoplasm</keyword>
<keyword id="KW-0368">Histidine biosynthesis</keyword>
<keyword id="KW-0378">Hydrolase</keyword>
<keyword id="KW-0460">Magnesium</keyword>
<keyword id="KW-0479">Metal-binding</keyword>
<keyword id="KW-1185">Reference proteome</keyword>
<keyword id="KW-0862">Zinc</keyword>
<dbReference type="EC" id="3.5.4.19" evidence="1"/>
<dbReference type="EMBL" id="CP000284">
    <property type="protein sequence ID" value="ABE48526.1"/>
    <property type="molecule type" value="Genomic_DNA"/>
</dbReference>
<dbReference type="RefSeq" id="WP_011478623.1">
    <property type="nucleotide sequence ID" value="NC_007947.1"/>
</dbReference>
<dbReference type="SMR" id="Q1H4R1"/>
<dbReference type="STRING" id="265072.Mfla_0255"/>
<dbReference type="KEGG" id="mfa:Mfla_0255"/>
<dbReference type="eggNOG" id="COG0139">
    <property type="taxonomic scope" value="Bacteria"/>
</dbReference>
<dbReference type="HOGENOM" id="CLU_048577_5_0_4"/>
<dbReference type="OrthoDB" id="9795769at2"/>
<dbReference type="UniPathway" id="UPA00031">
    <property type="reaction ID" value="UER00008"/>
</dbReference>
<dbReference type="Proteomes" id="UP000002440">
    <property type="component" value="Chromosome"/>
</dbReference>
<dbReference type="GO" id="GO:0005737">
    <property type="term" value="C:cytoplasm"/>
    <property type="evidence" value="ECO:0007669"/>
    <property type="project" value="UniProtKB-SubCell"/>
</dbReference>
<dbReference type="GO" id="GO:0000287">
    <property type="term" value="F:magnesium ion binding"/>
    <property type="evidence" value="ECO:0007669"/>
    <property type="project" value="UniProtKB-UniRule"/>
</dbReference>
<dbReference type="GO" id="GO:0004635">
    <property type="term" value="F:phosphoribosyl-AMP cyclohydrolase activity"/>
    <property type="evidence" value="ECO:0007669"/>
    <property type="project" value="UniProtKB-UniRule"/>
</dbReference>
<dbReference type="GO" id="GO:0008270">
    <property type="term" value="F:zinc ion binding"/>
    <property type="evidence" value="ECO:0007669"/>
    <property type="project" value="UniProtKB-UniRule"/>
</dbReference>
<dbReference type="GO" id="GO:0000105">
    <property type="term" value="P:L-histidine biosynthetic process"/>
    <property type="evidence" value="ECO:0007669"/>
    <property type="project" value="UniProtKB-UniRule"/>
</dbReference>
<dbReference type="FunFam" id="3.10.20.810:FF:000001">
    <property type="entry name" value="Histidine biosynthesis bifunctional protein HisIE"/>
    <property type="match status" value="1"/>
</dbReference>
<dbReference type="Gene3D" id="3.10.20.810">
    <property type="entry name" value="Phosphoribosyl-AMP cyclohydrolase"/>
    <property type="match status" value="1"/>
</dbReference>
<dbReference type="HAMAP" id="MF_01021">
    <property type="entry name" value="HisI"/>
    <property type="match status" value="1"/>
</dbReference>
<dbReference type="InterPro" id="IPR026660">
    <property type="entry name" value="PRA-CH"/>
</dbReference>
<dbReference type="InterPro" id="IPR002496">
    <property type="entry name" value="PRib_AMP_CycHydrolase_dom"/>
</dbReference>
<dbReference type="InterPro" id="IPR038019">
    <property type="entry name" value="PRib_AMP_CycHydrolase_sf"/>
</dbReference>
<dbReference type="NCBIfam" id="NF000768">
    <property type="entry name" value="PRK00051.1"/>
    <property type="match status" value="1"/>
</dbReference>
<dbReference type="PANTHER" id="PTHR42945">
    <property type="entry name" value="HISTIDINE BIOSYNTHESIS BIFUNCTIONAL PROTEIN"/>
    <property type="match status" value="1"/>
</dbReference>
<dbReference type="PANTHER" id="PTHR42945:SF1">
    <property type="entry name" value="HISTIDINE BIOSYNTHESIS BIFUNCTIONAL PROTEIN HIS7"/>
    <property type="match status" value="1"/>
</dbReference>
<dbReference type="Pfam" id="PF01502">
    <property type="entry name" value="PRA-CH"/>
    <property type="match status" value="1"/>
</dbReference>
<dbReference type="SUPFAM" id="SSF141734">
    <property type="entry name" value="HisI-like"/>
    <property type="match status" value="1"/>
</dbReference>
<evidence type="ECO:0000255" key="1">
    <source>
        <dbReference type="HAMAP-Rule" id="MF_01021"/>
    </source>
</evidence>
<feature type="chain" id="PRO_1000063409" description="Phosphoribosyl-AMP cyclohydrolase">
    <location>
        <begin position="1"/>
        <end position="130"/>
    </location>
</feature>
<feature type="binding site" evidence="1">
    <location>
        <position position="78"/>
    </location>
    <ligand>
        <name>Mg(2+)</name>
        <dbReference type="ChEBI" id="CHEBI:18420"/>
    </ligand>
</feature>
<feature type="binding site" evidence="1">
    <location>
        <position position="79"/>
    </location>
    <ligand>
        <name>Zn(2+)</name>
        <dbReference type="ChEBI" id="CHEBI:29105"/>
        <note>ligand shared between dimeric partners</note>
    </ligand>
</feature>
<feature type="binding site" evidence="1">
    <location>
        <position position="80"/>
    </location>
    <ligand>
        <name>Mg(2+)</name>
        <dbReference type="ChEBI" id="CHEBI:18420"/>
    </ligand>
</feature>
<feature type="binding site" evidence="1">
    <location>
        <position position="82"/>
    </location>
    <ligand>
        <name>Mg(2+)</name>
        <dbReference type="ChEBI" id="CHEBI:18420"/>
    </ligand>
</feature>
<feature type="binding site" evidence="1">
    <location>
        <position position="96"/>
    </location>
    <ligand>
        <name>Zn(2+)</name>
        <dbReference type="ChEBI" id="CHEBI:29105"/>
        <note>ligand shared between dimeric partners</note>
    </ligand>
</feature>
<feature type="binding site" evidence="1">
    <location>
        <position position="103"/>
    </location>
    <ligand>
        <name>Zn(2+)</name>
        <dbReference type="ChEBI" id="CHEBI:29105"/>
        <note>ligand shared between dimeric partners</note>
    </ligand>
</feature>
<proteinExistence type="inferred from homology"/>
<gene>
    <name evidence="1" type="primary">hisI</name>
    <name type="ordered locus">Mfla_0255</name>
</gene>
<organism>
    <name type="scientific">Methylobacillus flagellatus (strain ATCC 51484 / DSM 6875 / VKM B-1610 / KT)</name>
    <dbReference type="NCBI Taxonomy" id="265072"/>
    <lineage>
        <taxon>Bacteria</taxon>
        <taxon>Pseudomonadati</taxon>
        <taxon>Pseudomonadota</taxon>
        <taxon>Betaproteobacteria</taxon>
        <taxon>Nitrosomonadales</taxon>
        <taxon>Methylophilaceae</taxon>
        <taxon>Methylobacillus</taxon>
    </lineage>
</organism>
<protein>
    <recommendedName>
        <fullName evidence="1">Phosphoribosyl-AMP cyclohydrolase</fullName>
        <shortName evidence="1">PRA-CH</shortName>
        <ecNumber evidence="1">3.5.4.19</ecNumber>
    </recommendedName>
</protein>
<reference key="1">
    <citation type="submission" date="2006-03" db="EMBL/GenBank/DDBJ databases">
        <title>Complete sequence of Methylobacillus flagellatus KT.</title>
        <authorList>
            <consortium name="US DOE Joint Genome Institute"/>
            <person name="Copeland A."/>
            <person name="Lucas S."/>
            <person name="Lapidus A."/>
            <person name="Barry K."/>
            <person name="Detter J.C."/>
            <person name="Glavina del Rio T."/>
            <person name="Hammon N."/>
            <person name="Israni S."/>
            <person name="Dalin E."/>
            <person name="Tice H."/>
            <person name="Pitluck S."/>
            <person name="Brettin T."/>
            <person name="Bruce D."/>
            <person name="Han C."/>
            <person name="Tapia R."/>
            <person name="Saunders E."/>
            <person name="Gilna P."/>
            <person name="Schmutz J."/>
            <person name="Larimer F."/>
            <person name="Land M."/>
            <person name="Kyrpides N."/>
            <person name="Anderson I."/>
            <person name="Richardson P."/>
        </authorList>
    </citation>
    <scope>NUCLEOTIDE SEQUENCE [LARGE SCALE GENOMIC DNA]</scope>
    <source>
        <strain>ATCC 51484 / DSM 6875 / VKM B-1610 / KT</strain>
    </source>
</reference>
<accession>Q1H4R1</accession>
<comment type="function">
    <text evidence="1">Catalyzes the hydrolysis of the adenine ring of phosphoribosyl-AMP.</text>
</comment>
<comment type="catalytic activity">
    <reaction evidence="1">
        <text>1-(5-phospho-beta-D-ribosyl)-5'-AMP + H2O = 1-(5-phospho-beta-D-ribosyl)-5-[(5-phospho-beta-D-ribosylamino)methylideneamino]imidazole-4-carboxamide</text>
        <dbReference type="Rhea" id="RHEA:20049"/>
        <dbReference type="ChEBI" id="CHEBI:15377"/>
        <dbReference type="ChEBI" id="CHEBI:58435"/>
        <dbReference type="ChEBI" id="CHEBI:59457"/>
        <dbReference type="EC" id="3.5.4.19"/>
    </reaction>
</comment>
<comment type="cofactor">
    <cofactor evidence="1">
        <name>Mg(2+)</name>
        <dbReference type="ChEBI" id="CHEBI:18420"/>
    </cofactor>
    <text evidence="1">Binds 1 Mg(2+) ion per subunit.</text>
</comment>
<comment type="cofactor">
    <cofactor evidence="1">
        <name>Zn(2+)</name>
        <dbReference type="ChEBI" id="CHEBI:29105"/>
    </cofactor>
    <text evidence="1">Binds 1 zinc ion per subunit.</text>
</comment>
<comment type="pathway">
    <text evidence="1">Amino-acid biosynthesis; L-histidine biosynthesis; L-histidine from 5-phospho-alpha-D-ribose 1-diphosphate: step 3/9.</text>
</comment>
<comment type="subunit">
    <text evidence="1">Homodimer.</text>
</comment>
<comment type="subcellular location">
    <subcellularLocation>
        <location evidence="1">Cytoplasm</location>
    </subcellularLocation>
</comment>
<comment type="similarity">
    <text evidence="1">Belongs to the PRA-CH family.</text>
</comment>
<sequence>MSDTWLDKVHWTPDGLVPVIAQEAGTNKVLMFAWMNRESLRLTAETGQAVYWSRSRNRLWHKGEESGHVQKVHEIRLDCDEDVILILVEQVGGIACHTGRHNCFFQKLEQDGWVTDQAIIKNPEDIYHHE</sequence>